<feature type="chain" id="PRO_0000251391" description="Large ribosomal subunit protein uL18">
    <location>
        <begin position="1"/>
        <end position="118"/>
    </location>
</feature>
<gene>
    <name evidence="1" type="primary">rplR</name>
    <name type="ordered locus">Suden_0302</name>
</gene>
<evidence type="ECO:0000255" key="1">
    <source>
        <dbReference type="HAMAP-Rule" id="MF_01337"/>
    </source>
</evidence>
<evidence type="ECO:0000305" key="2"/>
<comment type="function">
    <text evidence="1">This is one of the proteins that bind and probably mediate the attachment of the 5S RNA into the large ribosomal subunit, where it forms part of the central protuberance.</text>
</comment>
<comment type="subunit">
    <text evidence="1">Part of the 50S ribosomal subunit; part of the 5S rRNA/L5/L18/L25 subcomplex. Contacts the 5S and 23S rRNAs.</text>
</comment>
<comment type="similarity">
    <text evidence="1">Belongs to the universal ribosomal protein uL18 family.</text>
</comment>
<keyword id="KW-1185">Reference proteome</keyword>
<keyword id="KW-0687">Ribonucleoprotein</keyword>
<keyword id="KW-0689">Ribosomal protein</keyword>
<keyword id="KW-0694">RNA-binding</keyword>
<keyword id="KW-0699">rRNA-binding</keyword>
<organism>
    <name type="scientific">Sulfurimonas denitrificans (strain ATCC 33889 / DSM 1251)</name>
    <name type="common">Thiomicrospira denitrificans (strain ATCC 33889 / DSM 1251)</name>
    <dbReference type="NCBI Taxonomy" id="326298"/>
    <lineage>
        <taxon>Bacteria</taxon>
        <taxon>Pseudomonadati</taxon>
        <taxon>Campylobacterota</taxon>
        <taxon>Epsilonproteobacteria</taxon>
        <taxon>Campylobacterales</taxon>
        <taxon>Sulfurimonadaceae</taxon>
        <taxon>Sulfurimonas</taxon>
    </lineage>
</organism>
<dbReference type="EMBL" id="CP000153">
    <property type="protein sequence ID" value="ABB43583.1"/>
    <property type="molecule type" value="Genomic_DNA"/>
</dbReference>
<dbReference type="RefSeq" id="WP_011371938.1">
    <property type="nucleotide sequence ID" value="NC_007575.1"/>
</dbReference>
<dbReference type="SMR" id="Q30TU8"/>
<dbReference type="STRING" id="326298.Suden_0302"/>
<dbReference type="KEGG" id="tdn:Suden_0302"/>
<dbReference type="eggNOG" id="COG0256">
    <property type="taxonomic scope" value="Bacteria"/>
</dbReference>
<dbReference type="HOGENOM" id="CLU_098841_0_1_7"/>
<dbReference type="OrthoDB" id="9810939at2"/>
<dbReference type="Proteomes" id="UP000002714">
    <property type="component" value="Chromosome"/>
</dbReference>
<dbReference type="GO" id="GO:0022625">
    <property type="term" value="C:cytosolic large ribosomal subunit"/>
    <property type="evidence" value="ECO:0007669"/>
    <property type="project" value="TreeGrafter"/>
</dbReference>
<dbReference type="GO" id="GO:0008097">
    <property type="term" value="F:5S rRNA binding"/>
    <property type="evidence" value="ECO:0007669"/>
    <property type="project" value="TreeGrafter"/>
</dbReference>
<dbReference type="GO" id="GO:0003735">
    <property type="term" value="F:structural constituent of ribosome"/>
    <property type="evidence" value="ECO:0007669"/>
    <property type="project" value="InterPro"/>
</dbReference>
<dbReference type="GO" id="GO:0006412">
    <property type="term" value="P:translation"/>
    <property type="evidence" value="ECO:0007669"/>
    <property type="project" value="UniProtKB-UniRule"/>
</dbReference>
<dbReference type="CDD" id="cd00432">
    <property type="entry name" value="Ribosomal_L18_L5e"/>
    <property type="match status" value="1"/>
</dbReference>
<dbReference type="Gene3D" id="3.30.420.100">
    <property type="match status" value="1"/>
</dbReference>
<dbReference type="HAMAP" id="MF_01337_B">
    <property type="entry name" value="Ribosomal_uL18_B"/>
    <property type="match status" value="1"/>
</dbReference>
<dbReference type="InterPro" id="IPR004389">
    <property type="entry name" value="Ribosomal_uL18_bac-type"/>
</dbReference>
<dbReference type="InterPro" id="IPR005484">
    <property type="entry name" value="Ribosomal_uL18_bac/euk"/>
</dbReference>
<dbReference type="NCBIfam" id="TIGR00060">
    <property type="entry name" value="L18_bact"/>
    <property type="match status" value="1"/>
</dbReference>
<dbReference type="PANTHER" id="PTHR12899">
    <property type="entry name" value="39S RIBOSOMAL PROTEIN L18, MITOCHONDRIAL"/>
    <property type="match status" value="1"/>
</dbReference>
<dbReference type="PANTHER" id="PTHR12899:SF3">
    <property type="entry name" value="LARGE RIBOSOMAL SUBUNIT PROTEIN UL18M"/>
    <property type="match status" value="1"/>
</dbReference>
<dbReference type="Pfam" id="PF00861">
    <property type="entry name" value="Ribosomal_L18p"/>
    <property type="match status" value="1"/>
</dbReference>
<dbReference type="SUPFAM" id="SSF53137">
    <property type="entry name" value="Translational machinery components"/>
    <property type="match status" value="1"/>
</dbReference>
<protein>
    <recommendedName>
        <fullName evidence="1">Large ribosomal subunit protein uL18</fullName>
    </recommendedName>
    <alternativeName>
        <fullName evidence="2">50S ribosomal protein L18</fullName>
    </alternativeName>
</protein>
<proteinExistence type="inferred from homology"/>
<name>RL18_SULDN</name>
<accession>Q30TU8</accession>
<reference key="1">
    <citation type="journal article" date="2008" name="Appl. Environ. Microbiol.">
        <title>Genome of the epsilonproteobacterial chemolithoautotroph Sulfurimonas denitrificans.</title>
        <authorList>
            <person name="Sievert S.M."/>
            <person name="Scott K.M."/>
            <person name="Klotz M.G."/>
            <person name="Chain P.S.G."/>
            <person name="Hauser L.J."/>
            <person name="Hemp J."/>
            <person name="Huegler M."/>
            <person name="Land M."/>
            <person name="Lapidus A."/>
            <person name="Larimer F.W."/>
            <person name="Lucas S."/>
            <person name="Malfatti S.A."/>
            <person name="Meyer F."/>
            <person name="Paulsen I.T."/>
            <person name="Ren Q."/>
            <person name="Simon J."/>
            <person name="Bailey K."/>
            <person name="Diaz E."/>
            <person name="Fitzpatrick K.A."/>
            <person name="Glover B."/>
            <person name="Gwatney N."/>
            <person name="Korajkic A."/>
            <person name="Long A."/>
            <person name="Mobberley J.M."/>
            <person name="Pantry S.N."/>
            <person name="Pazder G."/>
            <person name="Peterson S."/>
            <person name="Quintanilla J.D."/>
            <person name="Sprinkle R."/>
            <person name="Stephens J."/>
            <person name="Thomas P."/>
            <person name="Vaughn R."/>
            <person name="Weber M.J."/>
            <person name="Wooten L.L."/>
        </authorList>
    </citation>
    <scope>NUCLEOTIDE SEQUENCE [LARGE SCALE GENOMIC DNA]</scope>
    <source>
        <strain>ATCC 33889 / DSM 1251</strain>
    </source>
</reference>
<sequence length="118" mass="12795">MKAKVLKSKIANRLKRKRRIRAKISGCASLPRVSVFRSNRYLSVQAINDATATTLTSLSSKATGHKANKEGGAALGAAFAAKLKEVGISQIVFDRNGYQYHGVIAAFGDALRENEIKF</sequence>